<organism>
    <name type="scientific">Anemonia viridis</name>
    <name type="common">Snakelocks anemone</name>
    <dbReference type="NCBI Taxonomy" id="51769"/>
    <lineage>
        <taxon>Eukaryota</taxon>
        <taxon>Metazoa</taxon>
        <taxon>Cnidaria</taxon>
        <taxon>Anthozoa</taxon>
        <taxon>Hexacorallia</taxon>
        <taxon>Actiniaria</taxon>
        <taxon>Actiniidae</taxon>
        <taxon>Anemonia</taxon>
    </lineage>
</organism>
<comment type="function">
    <text evidence="2">Blocks Kv3 voltage-gated potassium channels (By similarity). Reduces blood pressure (By similarity).</text>
</comment>
<comment type="subcellular location">
    <subcellularLocation>
        <location evidence="5">Secreted</location>
    </subcellularLocation>
    <subcellularLocation>
        <location evidence="5">Nematocyst</location>
    </subcellularLocation>
</comment>
<comment type="mass spectrometry"/>
<comment type="similarity">
    <text evidence="5">Belongs to the sea anemone type 3 (BDS) potassium channel toxin family.</text>
</comment>
<comment type="caution">
    <text evidence="5">Opinions are divided on whether Anemonia viridis (Forsskal, 1775) and Anemonia sulcata (Pennant, 1777) are separate species.</text>
</comment>
<dbReference type="SMR" id="P0DQN6"/>
<dbReference type="GO" id="GO:0005576">
    <property type="term" value="C:extracellular region"/>
    <property type="evidence" value="ECO:0007669"/>
    <property type="project" value="UniProtKB-SubCell"/>
</dbReference>
<dbReference type="GO" id="GO:0042151">
    <property type="term" value="C:nematocyst"/>
    <property type="evidence" value="ECO:0007669"/>
    <property type="project" value="UniProtKB-SubCell"/>
</dbReference>
<dbReference type="GO" id="GO:0008200">
    <property type="term" value="F:ion channel inhibitor activity"/>
    <property type="evidence" value="ECO:0007669"/>
    <property type="project" value="InterPro"/>
</dbReference>
<dbReference type="GO" id="GO:0015459">
    <property type="term" value="F:potassium channel regulator activity"/>
    <property type="evidence" value="ECO:0007669"/>
    <property type="project" value="UniProtKB-KW"/>
</dbReference>
<dbReference type="GO" id="GO:0090729">
    <property type="term" value="F:toxin activity"/>
    <property type="evidence" value="ECO:0007669"/>
    <property type="project" value="UniProtKB-KW"/>
</dbReference>
<dbReference type="GO" id="GO:0008217">
    <property type="term" value="P:regulation of blood pressure"/>
    <property type="evidence" value="ECO:0007669"/>
    <property type="project" value="UniProtKB-KW"/>
</dbReference>
<dbReference type="Gene3D" id="2.20.20.10">
    <property type="entry name" value="Anthopleurin-A"/>
    <property type="match status" value="1"/>
</dbReference>
<dbReference type="InterPro" id="IPR012414">
    <property type="entry name" value="BDS_K_chnl_tox"/>
</dbReference>
<dbReference type="InterPro" id="IPR023355">
    <property type="entry name" value="Myo_ane_neurotoxin_sf"/>
</dbReference>
<dbReference type="Pfam" id="PF07936">
    <property type="entry name" value="Defensin_4"/>
    <property type="match status" value="1"/>
</dbReference>
<dbReference type="SUPFAM" id="SSF57392">
    <property type="entry name" value="Defensin-like"/>
    <property type="match status" value="1"/>
</dbReference>
<protein>
    <recommendedName>
        <fullName evidence="5">Kappa-actitoxin-Avd4p</fullName>
        <shortName evidence="5">Kappa-AITX-Avd4p</shortName>
    </recommendedName>
    <alternativeName>
        <fullName evidence="4">Blood depressing substance 16</fullName>
        <shortName evidence="4">BDS-16</shortName>
    </alternativeName>
</protein>
<keyword id="KW-0903">Direct protein sequencing</keyword>
<keyword id="KW-1015">Disulfide bond</keyword>
<keyword id="KW-0382">Hypotensive agent</keyword>
<keyword id="KW-0872">Ion channel impairing toxin</keyword>
<keyword id="KW-0166">Nematocyst</keyword>
<keyword id="KW-0528">Neurotoxin</keyword>
<keyword id="KW-0632">Potassium channel impairing toxin</keyword>
<keyword id="KW-0964">Secreted</keyword>
<keyword id="KW-0800">Toxin</keyword>
<keyword id="KW-1220">Voltage-gated potassium channel impairing toxin</keyword>
<evidence type="ECO:0000250" key="1">
    <source>
        <dbReference type="UniProtKB" id="P0DMX9"/>
    </source>
</evidence>
<evidence type="ECO:0000250" key="2">
    <source>
        <dbReference type="UniProtKB" id="P11494"/>
    </source>
</evidence>
<evidence type="ECO:0000269" key="3">
    <source>
    </source>
</evidence>
<evidence type="ECO:0000303" key="4">
    <source>
    </source>
</evidence>
<evidence type="ECO:0000305" key="5"/>
<accession>P0DQN6</accession>
<feature type="chain" id="PRO_0000451608" description="Kappa-actitoxin-Avd4p" evidence="3">
    <location>
        <begin position="1"/>
        <end position="43"/>
    </location>
</feature>
<feature type="disulfide bond" evidence="1">
    <location>
        <begin position="4"/>
        <end position="39"/>
    </location>
</feature>
<feature type="disulfide bond" evidence="1">
    <location>
        <begin position="6"/>
        <end position="32"/>
    </location>
</feature>
<feature type="disulfide bond" evidence="1">
    <location>
        <begin position="22"/>
        <end position="40"/>
    </location>
</feature>
<sequence>AAPCSCPGKPGRGDLWIFRGTCPGGYGYTSNCYKWPNICCYPH</sequence>
<proteinExistence type="evidence at protein level"/>
<reference key="1">
    <citation type="journal article" date="2018" name="Mar. Drugs">
        <title>A low molecular weight protein from the sea anemone anemonia viridis with an anti-angiogenic activity.</title>
        <authorList>
            <person name="Loret E.P."/>
            <person name="Luis J."/>
            <person name="Nuccio C."/>
            <person name="Villard C."/>
            <person name="Mansuelle P."/>
            <person name="Lebrun R."/>
            <person name="Villard P.H."/>
        </authorList>
    </citation>
    <scope>PROTEIN SEQUENCE</scope>
    <scope>MASS SPECTROMETRY</scope>
</reference>
<name>BDSG_ANEVI</name>